<feature type="chain" id="PRO_0000257323" description="Ribosomal RNA small subunit methyltransferase A">
    <location>
        <begin position="1"/>
        <end position="268"/>
    </location>
</feature>
<feature type="binding site" evidence="1">
    <location>
        <position position="18"/>
    </location>
    <ligand>
        <name>S-adenosyl-L-methionine</name>
        <dbReference type="ChEBI" id="CHEBI:59789"/>
    </ligand>
</feature>
<feature type="binding site" evidence="1">
    <location>
        <position position="20"/>
    </location>
    <ligand>
        <name>S-adenosyl-L-methionine</name>
        <dbReference type="ChEBI" id="CHEBI:59789"/>
    </ligand>
</feature>
<feature type="binding site" evidence="1">
    <location>
        <position position="45"/>
    </location>
    <ligand>
        <name>S-adenosyl-L-methionine</name>
        <dbReference type="ChEBI" id="CHEBI:59789"/>
    </ligand>
</feature>
<feature type="binding site" evidence="1">
    <location>
        <position position="66"/>
    </location>
    <ligand>
        <name>S-adenosyl-L-methionine</name>
        <dbReference type="ChEBI" id="CHEBI:59789"/>
    </ligand>
</feature>
<feature type="binding site" evidence="1">
    <location>
        <position position="91"/>
    </location>
    <ligand>
        <name>S-adenosyl-L-methionine</name>
        <dbReference type="ChEBI" id="CHEBI:59789"/>
    </ligand>
</feature>
<feature type="binding site" evidence="1">
    <location>
        <position position="112"/>
    </location>
    <ligand>
        <name>S-adenosyl-L-methionine</name>
        <dbReference type="ChEBI" id="CHEBI:59789"/>
    </ligand>
</feature>
<gene>
    <name evidence="1" type="primary">rsmA</name>
    <name evidence="1" type="synonym">ksgA</name>
    <name type="ordered locus">PSHAa2635</name>
</gene>
<sequence length="268" mass="30240">MTDKVHLGHRARKRFGQNFLFDDMIIGKIVSAIDPKPEDNLVEIGPGLGAITEPVAELSGHLTVVELDKDLAQRLIEHPFLGPKLTVNQGDAMTFDFASLVRDDKKLKVFGNLPYNISTPLLFHLFEFADNIEHMHFMLQKEVVKRMVAGPGSKTFGRLSVMTQYYCNAMPVIEVPPECFKPAPKVDSAVIRLIPKKPEQRTAKSVKILNNVCLEAFNQRRKTLRNSLSNLLTADELTSIGIDVTLRAERLSLQQFIDIANWIYDNKQ</sequence>
<reference key="1">
    <citation type="journal article" date="2005" name="Genome Res.">
        <title>Coping with cold: the genome of the versatile marine Antarctica bacterium Pseudoalteromonas haloplanktis TAC125.</title>
        <authorList>
            <person name="Medigue C."/>
            <person name="Krin E."/>
            <person name="Pascal G."/>
            <person name="Barbe V."/>
            <person name="Bernsel A."/>
            <person name="Bertin P.N."/>
            <person name="Cheung F."/>
            <person name="Cruveiller S."/>
            <person name="D'Amico S."/>
            <person name="Duilio A."/>
            <person name="Fang G."/>
            <person name="Feller G."/>
            <person name="Ho C."/>
            <person name="Mangenot S."/>
            <person name="Marino G."/>
            <person name="Nilsson J."/>
            <person name="Parrilli E."/>
            <person name="Rocha E.P.C."/>
            <person name="Rouy Z."/>
            <person name="Sekowska A."/>
            <person name="Tutino M.L."/>
            <person name="Vallenet D."/>
            <person name="von Heijne G."/>
            <person name="Danchin A."/>
        </authorList>
    </citation>
    <scope>NUCLEOTIDE SEQUENCE [LARGE SCALE GENOMIC DNA]</scope>
    <source>
        <strain>TAC 125</strain>
    </source>
</reference>
<evidence type="ECO:0000255" key="1">
    <source>
        <dbReference type="HAMAP-Rule" id="MF_00607"/>
    </source>
</evidence>
<name>RSMA_PSET1</name>
<dbReference type="EC" id="2.1.1.182" evidence="1"/>
<dbReference type="EMBL" id="CR954246">
    <property type="protein sequence ID" value="CAI87683.1"/>
    <property type="molecule type" value="Genomic_DNA"/>
</dbReference>
<dbReference type="SMR" id="Q3IFD1"/>
<dbReference type="STRING" id="326442.PSHAa2635"/>
<dbReference type="KEGG" id="pha:PSHAa2635"/>
<dbReference type="PATRIC" id="fig|326442.8.peg.2545"/>
<dbReference type="eggNOG" id="COG0030">
    <property type="taxonomic scope" value="Bacteria"/>
</dbReference>
<dbReference type="HOGENOM" id="CLU_041220_0_1_6"/>
<dbReference type="BioCyc" id="PHAL326442:PSHA_RS12970-MONOMER"/>
<dbReference type="Proteomes" id="UP000006843">
    <property type="component" value="Chromosome I"/>
</dbReference>
<dbReference type="GO" id="GO:0005829">
    <property type="term" value="C:cytosol"/>
    <property type="evidence" value="ECO:0007669"/>
    <property type="project" value="TreeGrafter"/>
</dbReference>
<dbReference type="GO" id="GO:0052908">
    <property type="term" value="F:16S rRNA (adenine(1518)-N(6)/adenine(1519)-N(6))-dimethyltransferase activity"/>
    <property type="evidence" value="ECO:0007669"/>
    <property type="project" value="UniProtKB-EC"/>
</dbReference>
<dbReference type="GO" id="GO:0003723">
    <property type="term" value="F:RNA binding"/>
    <property type="evidence" value="ECO:0007669"/>
    <property type="project" value="UniProtKB-KW"/>
</dbReference>
<dbReference type="CDD" id="cd02440">
    <property type="entry name" value="AdoMet_MTases"/>
    <property type="match status" value="1"/>
</dbReference>
<dbReference type="FunFam" id="1.10.8.100:FF:000001">
    <property type="entry name" value="Ribosomal RNA small subunit methyltransferase A"/>
    <property type="match status" value="1"/>
</dbReference>
<dbReference type="FunFam" id="3.40.50.150:FF:000006">
    <property type="entry name" value="Ribosomal RNA small subunit methyltransferase A"/>
    <property type="match status" value="1"/>
</dbReference>
<dbReference type="Gene3D" id="1.10.8.100">
    <property type="entry name" value="Ribosomal RNA adenine dimethylase-like, domain 2"/>
    <property type="match status" value="1"/>
</dbReference>
<dbReference type="Gene3D" id="3.40.50.150">
    <property type="entry name" value="Vaccinia Virus protein VP39"/>
    <property type="match status" value="1"/>
</dbReference>
<dbReference type="HAMAP" id="MF_00607">
    <property type="entry name" value="16SrRNA_methyltr_A"/>
    <property type="match status" value="1"/>
</dbReference>
<dbReference type="InterPro" id="IPR001737">
    <property type="entry name" value="KsgA/Erm"/>
</dbReference>
<dbReference type="InterPro" id="IPR023165">
    <property type="entry name" value="rRNA_Ade_diMease-like_C"/>
</dbReference>
<dbReference type="InterPro" id="IPR020596">
    <property type="entry name" value="rRNA_Ade_Mease_Trfase_CS"/>
</dbReference>
<dbReference type="InterPro" id="IPR020598">
    <property type="entry name" value="rRNA_Ade_methylase_Trfase_N"/>
</dbReference>
<dbReference type="InterPro" id="IPR011530">
    <property type="entry name" value="rRNA_adenine_dimethylase"/>
</dbReference>
<dbReference type="InterPro" id="IPR029063">
    <property type="entry name" value="SAM-dependent_MTases_sf"/>
</dbReference>
<dbReference type="NCBIfam" id="TIGR00755">
    <property type="entry name" value="ksgA"/>
    <property type="match status" value="1"/>
</dbReference>
<dbReference type="PANTHER" id="PTHR11727">
    <property type="entry name" value="DIMETHYLADENOSINE TRANSFERASE"/>
    <property type="match status" value="1"/>
</dbReference>
<dbReference type="PANTHER" id="PTHR11727:SF7">
    <property type="entry name" value="DIMETHYLADENOSINE TRANSFERASE-RELATED"/>
    <property type="match status" value="1"/>
</dbReference>
<dbReference type="Pfam" id="PF00398">
    <property type="entry name" value="RrnaAD"/>
    <property type="match status" value="1"/>
</dbReference>
<dbReference type="SMART" id="SM00650">
    <property type="entry name" value="rADc"/>
    <property type="match status" value="1"/>
</dbReference>
<dbReference type="SUPFAM" id="SSF53335">
    <property type="entry name" value="S-adenosyl-L-methionine-dependent methyltransferases"/>
    <property type="match status" value="1"/>
</dbReference>
<dbReference type="PROSITE" id="PS01131">
    <property type="entry name" value="RRNA_A_DIMETH"/>
    <property type="match status" value="1"/>
</dbReference>
<dbReference type="PROSITE" id="PS51689">
    <property type="entry name" value="SAM_RNA_A_N6_MT"/>
    <property type="match status" value="1"/>
</dbReference>
<comment type="function">
    <text evidence="1">Specifically dimethylates two adjacent adenosines (A1518 and A1519) in the loop of a conserved hairpin near the 3'-end of 16S rRNA in the 30S particle. May play a critical role in biogenesis of 30S subunits.</text>
</comment>
<comment type="catalytic activity">
    <reaction evidence="1">
        <text>adenosine(1518)/adenosine(1519) in 16S rRNA + 4 S-adenosyl-L-methionine = N(6)-dimethyladenosine(1518)/N(6)-dimethyladenosine(1519) in 16S rRNA + 4 S-adenosyl-L-homocysteine + 4 H(+)</text>
        <dbReference type="Rhea" id="RHEA:19609"/>
        <dbReference type="Rhea" id="RHEA-COMP:10232"/>
        <dbReference type="Rhea" id="RHEA-COMP:10233"/>
        <dbReference type="ChEBI" id="CHEBI:15378"/>
        <dbReference type="ChEBI" id="CHEBI:57856"/>
        <dbReference type="ChEBI" id="CHEBI:59789"/>
        <dbReference type="ChEBI" id="CHEBI:74411"/>
        <dbReference type="ChEBI" id="CHEBI:74493"/>
        <dbReference type="EC" id="2.1.1.182"/>
    </reaction>
</comment>
<comment type="subcellular location">
    <subcellularLocation>
        <location evidence="1">Cytoplasm</location>
    </subcellularLocation>
</comment>
<comment type="similarity">
    <text evidence="1">Belongs to the class I-like SAM-binding methyltransferase superfamily. rRNA adenine N(6)-methyltransferase family. RsmA subfamily.</text>
</comment>
<keyword id="KW-0963">Cytoplasm</keyword>
<keyword id="KW-0489">Methyltransferase</keyword>
<keyword id="KW-1185">Reference proteome</keyword>
<keyword id="KW-0694">RNA-binding</keyword>
<keyword id="KW-0698">rRNA processing</keyword>
<keyword id="KW-0949">S-adenosyl-L-methionine</keyword>
<keyword id="KW-0808">Transferase</keyword>
<proteinExistence type="inferred from homology"/>
<accession>Q3IFD1</accession>
<protein>
    <recommendedName>
        <fullName evidence="1">Ribosomal RNA small subunit methyltransferase A</fullName>
        <ecNumber evidence="1">2.1.1.182</ecNumber>
    </recommendedName>
    <alternativeName>
        <fullName evidence="1">16S rRNA (adenine(1518)-N(6)/adenine(1519)-N(6))-dimethyltransferase</fullName>
    </alternativeName>
    <alternativeName>
        <fullName evidence="1">16S rRNA dimethyladenosine transferase</fullName>
    </alternativeName>
    <alternativeName>
        <fullName evidence="1">16S rRNA dimethylase</fullName>
    </alternativeName>
    <alternativeName>
        <fullName evidence="1">S-adenosylmethionine-6-N', N'-adenosyl(rRNA) dimethyltransferase</fullName>
    </alternativeName>
</protein>
<organism>
    <name type="scientific">Pseudoalteromonas translucida (strain TAC 125)</name>
    <dbReference type="NCBI Taxonomy" id="326442"/>
    <lineage>
        <taxon>Bacteria</taxon>
        <taxon>Pseudomonadati</taxon>
        <taxon>Pseudomonadota</taxon>
        <taxon>Gammaproteobacteria</taxon>
        <taxon>Alteromonadales</taxon>
        <taxon>Pseudoalteromonadaceae</taxon>
        <taxon>Pseudoalteromonas</taxon>
    </lineage>
</organism>